<keyword id="KW-0284">Flavonoid biosynthesis</keyword>
<keyword id="KW-0489">Methyltransferase</keyword>
<keyword id="KW-1185">Reference proteome</keyword>
<keyword id="KW-0949">S-adenosyl-L-methionine</keyword>
<keyword id="KW-0808">Transferase</keyword>
<reference key="1">
    <citation type="submission" date="2017-12" db="EMBL/GenBank/DDBJ databases">
        <authorList>
            <consortium name="DOE Joint Genome Institute"/>
            <person name="Haridas S."/>
            <person name="Kjaerbolling I."/>
            <person name="Vesth T.C."/>
            <person name="Frisvad J.C."/>
            <person name="Nybo J.L."/>
            <person name="Theobald S."/>
            <person name="Kuo A."/>
            <person name="Bowyer P."/>
            <person name="Matsuda Y."/>
            <person name="Mondo S."/>
            <person name="Lyhne E.K."/>
            <person name="Kogle M.E."/>
            <person name="Clum A."/>
            <person name="Lipzen A."/>
            <person name="Salamov A."/>
            <person name="Ngan C.Y."/>
            <person name="Daum C."/>
            <person name="Chiniquy J."/>
            <person name="Barry K."/>
            <person name="LaButti K."/>
            <person name="Simmons B.A."/>
            <person name="Magnuson J.K."/>
            <person name="Mortensen U.H."/>
            <person name="Larsen T.O."/>
            <person name="Grigoriev I.V."/>
            <person name="Baker S.E."/>
            <person name="Andersen M.R."/>
            <person name="Nordberg H.P."/>
            <person name="Cantor M.N."/>
            <person name="Hua S.X."/>
        </authorList>
    </citation>
    <scope>NUCLEOTIDE SEQUENCE [LARGE SCALE GENOMIC DNA]</scope>
    <source>
        <strain>CBS 102.13</strain>
    </source>
</reference>
<reference key="2">
    <citation type="journal article" date="2023" name="Angew. Chem. Int. Ed.">
        <title>Discovery of a Unique Flavonoid Biosynthesis Mechanism in Fungi by Genome Mining.</title>
        <authorList>
            <person name="Zhang W."/>
            <person name="Zhang X."/>
            <person name="Feng D."/>
            <person name="Liang Y."/>
            <person name="Wu Z."/>
            <person name="Du S."/>
            <person name="Zhou Y."/>
            <person name="Geng C."/>
            <person name="Men P."/>
            <person name="Fu C."/>
            <person name="Huang X."/>
            <person name="Lu X."/>
        </authorList>
    </citation>
    <scope>FUNCTION</scope>
    <scope>DISRUPTION PHENOTYPE</scope>
    <scope>PATHWAY</scope>
</reference>
<comment type="function">
    <text evidence="1">Methyltransferase; part of the gene cluster that mediates the biosynthesis of chlorflavonin, a fungal flavonoid with acetolactate synthase inhibitory activity (PubMed:36704842). Within the pathway, cfoB is responsible for the methylation at position C7-OH of flavonoid (PubMed:36704842). The pathway begins with the PKS-NRPS hybrid synthetase cfoA that uses benzoic acid or p-hydroxybenzoic acid as a starter unit with four rounds of chain elongation using malonyl-CoA to form the chalcone skeleton. Then, a new type of chalcone isomerase, cfoK, catalyzes the conversion of the chalcone into a flavanone by a histidine-mediated oxa-Michael addition mechanism. The desaturation of flavanone to flavone is catalyzed by a new type of flavone synthase, the flavin mononucleotide (FMN)-dependent oxidoreductase cfoJ. Monooxygenases cfoF, cfoG, and P450 cfoH are responsible for the hydroxylation of the flavonoid skeleton at sites C3, C8, and C2', respectively. Like cfoF, the dehydratase cfoI also plays a role in the hydroxylation of position C3. Methyltransferases cfoB, cfoC, and cfoD then catalyze the methylation of C7-OH, C8-OH, and C3-OH, respectively. Finally, the monooxygenase cfoE is responsible for the chlorination of flavonoid at position C3' (PubMed:36704842).</text>
</comment>
<comment type="pathway">
    <text evidence="1">Secondary metabolite biosynthesis; flavonoid biosynthesis.</text>
</comment>
<comment type="disruption phenotype">
    <text evidence="1">Impairs methylation of the flavonoid skeleton at position C7-OH.</text>
</comment>
<comment type="similarity">
    <text evidence="3">Belongs to the methyltransferase superfamily.</text>
</comment>
<organism>
    <name type="scientific">Aspergillus candidus</name>
    <dbReference type="NCBI Taxonomy" id="41067"/>
    <lineage>
        <taxon>Eukaryota</taxon>
        <taxon>Fungi</taxon>
        <taxon>Dikarya</taxon>
        <taxon>Ascomycota</taxon>
        <taxon>Pezizomycotina</taxon>
        <taxon>Eurotiomycetes</taxon>
        <taxon>Eurotiomycetidae</taxon>
        <taxon>Eurotiales</taxon>
        <taxon>Aspergillaceae</taxon>
        <taxon>Aspergillus</taxon>
        <taxon>Aspergillus subgen. Circumdati</taxon>
    </lineage>
</organism>
<protein>
    <recommendedName>
        <fullName evidence="2">Methyltransferase cfoB</fullName>
        <ecNumber evidence="1">2.1.1.-</ecNumber>
    </recommendedName>
    <alternativeName>
        <fullName evidence="2">Chlorflavonin biosynthesis cluster protein B</fullName>
    </alternativeName>
</protein>
<sequence>MATSNATDDLFASYDAEYWNTYLDARPTYSSDFYSIIFEHHAQKGSDSWALAHDVGTGPGNVAAVLAQRFEQVIATDASPDTVNAAQKRQQQTNKIRFAECKGENLALAGLSPPRTADLVANAEAIPLMDAEEAIGCFAELLAPGGTCAVWFYGRPKFAGPDTAVNEACQRIFYRISTRLLNKIGGVSGPLWERSTRTIASQLDNVAFPTAQWRDVVRYKWNCEQTTMLFHDESQFGGPVERVNCVGPAEEVVSKTDPGFWQMQWGAAEVRRWFEAHLPTWFEDKAEDLELEGWYEELDRVLGGKSLPVTWPVVLLLATRV</sequence>
<feature type="chain" id="PRO_0000459547" description="Methyltransferase cfoB">
    <location>
        <begin position="1"/>
        <end position="321"/>
    </location>
</feature>
<proteinExistence type="inferred from homology"/>
<name>CFOB_ASPCN</name>
<evidence type="ECO:0000269" key="1">
    <source>
    </source>
</evidence>
<evidence type="ECO:0000303" key="2">
    <source>
    </source>
</evidence>
<evidence type="ECO:0000305" key="3"/>
<gene>
    <name evidence="2" type="primary">cfoB</name>
    <name type="ORF">BDW47DRAFT_111385</name>
</gene>
<accession>A0A2I2F2M2</accession>
<dbReference type="EC" id="2.1.1.-" evidence="1"/>
<dbReference type="EMBL" id="KZ559171">
    <property type="protein sequence ID" value="PLB34858.1"/>
    <property type="molecule type" value="Genomic_DNA"/>
</dbReference>
<dbReference type="SMR" id="A0A2I2F2M2"/>
<dbReference type="STRING" id="41067.A0A2I2F2M2"/>
<dbReference type="OrthoDB" id="10004862at2759"/>
<dbReference type="UniPathway" id="UPA00154"/>
<dbReference type="Proteomes" id="UP000234585">
    <property type="component" value="Unassembled WGS sequence"/>
</dbReference>
<dbReference type="GO" id="GO:0008168">
    <property type="term" value="F:methyltransferase activity"/>
    <property type="evidence" value="ECO:0007669"/>
    <property type="project" value="UniProtKB-KW"/>
</dbReference>
<dbReference type="GO" id="GO:0009813">
    <property type="term" value="P:flavonoid biosynthetic process"/>
    <property type="evidence" value="ECO:0007669"/>
    <property type="project" value="UniProtKB-UniPathway"/>
</dbReference>
<dbReference type="GO" id="GO:0032259">
    <property type="term" value="P:methylation"/>
    <property type="evidence" value="ECO:0007669"/>
    <property type="project" value="UniProtKB-KW"/>
</dbReference>
<dbReference type="CDD" id="cd02440">
    <property type="entry name" value="AdoMet_MTases"/>
    <property type="match status" value="1"/>
</dbReference>
<dbReference type="Gene3D" id="3.40.50.150">
    <property type="entry name" value="Vaccinia Virus protein VP39"/>
    <property type="match status" value="1"/>
</dbReference>
<dbReference type="InterPro" id="IPR051052">
    <property type="entry name" value="Diverse_substrate_MTase"/>
</dbReference>
<dbReference type="InterPro" id="IPR041698">
    <property type="entry name" value="Methyltransf_25"/>
</dbReference>
<dbReference type="InterPro" id="IPR029063">
    <property type="entry name" value="SAM-dependent_MTases_sf"/>
</dbReference>
<dbReference type="PANTHER" id="PTHR44942">
    <property type="entry name" value="METHYLTRANSF_11 DOMAIN-CONTAINING PROTEIN"/>
    <property type="match status" value="1"/>
</dbReference>
<dbReference type="PANTHER" id="PTHR44942:SF4">
    <property type="entry name" value="METHYLTRANSFERASE TYPE 11 DOMAIN-CONTAINING PROTEIN"/>
    <property type="match status" value="1"/>
</dbReference>
<dbReference type="Pfam" id="PF13649">
    <property type="entry name" value="Methyltransf_25"/>
    <property type="match status" value="1"/>
</dbReference>
<dbReference type="SUPFAM" id="SSF53335">
    <property type="entry name" value="S-adenosyl-L-methionine-dependent methyltransferases"/>
    <property type="match status" value="1"/>
</dbReference>